<name>L_EBORR</name>
<organism>
    <name type="scientific">Reston ebolavirus (strain Reston-89)</name>
    <name type="common">REBOV</name>
    <name type="synonym">Reston Ebola virus</name>
    <dbReference type="NCBI Taxonomy" id="386032"/>
    <lineage>
        <taxon>Viruses</taxon>
        <taxon>Riboviria</taxon>
        <taxon>Orthornavirae</taxon>
        <taxon>Negarnaviricota</taxon>
        <taxon>Haploviricotina</taxon>
        <taxon>Monjiviricetes</taxon>
        <taxon>Mononegavirales</taxon>
        <taxon>Filoviridae</taxon>
        <taxon>Orthoebolavirus</taxon>
        <taxon>Orthoebolavirus restonense</taxon>
        <taxon>Reston ebolavirus</taxon>
    </lineage>
</organism>
<comment type="function">
    <text evidence="2">RNA-directed RNA polymerase that catalyzes the transcription of viral mRNAs, their capping and polyadenylation. The template is composed of the viral RNA tightly encapsidated by the nucleoprotein (N). The viral polymerase binds to the genomic RNA at the 3' leader promoter, and transcribes subsequently all viral mRNAs with a decreasing efficiency. The first gene is the most transcribed, and the last the least transcribed. The viral phosphoprotein acts as a processivity factor. Capping is concomitant with initiation of mRNA transcription. Indeed, a GDP polyribonucleotidyl transferase (PRNTase) adds the cap structure when the nascent RNA chain length has reached few nucleotides. Ribose 2'-O methylation of viral mRNA cap precedes and facilitates subsequent guanine-N-7 methylation, both activities being carried by the viral polymerase. Polyadenylation of mRNAs occur by a stuttering mechanism at a slipery stop site present at the end viral genes. After finishing transcription of a mRNA, the polymerase can resume transcription of the downstream gene.</text>
</comment>
<comment type="function">
    <text evidence="2">RNA-directed RNA polymerase that catalyzes the replication of viral genomic RNA. The template is composed of the viral RNA tightly encapsidated by the nucleoprotein (N). The replicase mode is dependent on intracellular N protein concentration. In this mode, the polymerase replicates the whole viral genome without recognizing transcriptional signals, and the replicated genome is not caped or polyadenylated.</text>
</comment>
<comment type="catalytic activity">
    <reaction evidence="4">
        <text>RNA(n) + a ribonucleoside 5'-triphosphate = RNA(n+1) + diphosphate</text>
        <dbReference type="Rhea" id="RHEA:21248"/>
        <dbReference type="Rhea" id="RHEA-COMP:14527"/>
        <dbReference type="Rhea" id="RHEA-COMP:17342"/>
        <dbReference type="ChEBI" id="CHEBI:33019"/>
        <dbReference type="ChEBI" id="CHEBI:61557"/>
        <dbReference type="ChEBI" id="CHEBI:140395"/>
        <dbReference type="EC" id="2.7.7.48"/>
    </reaction>
</comment>
<comment type="catalytic activity">
    <reaction evidence="2">
        <text>a 5'-end (5'-triphosphoguanosine)-adenylyl-adenylyl-cytidylyl-adenosine in mRNA + 2 S-adenosyl-L-methionine = a 5'-end (N(7)-methyl 5'-triphosphoguanosine)-(2'-O-methyladenylyl)-adenylyl-cytidylyl-adenosine in mRNA + 2 S-adenosyl-L-homocysteine + H(+)</text>
        <dbReference type="Rhea" id="RHEA:65376"/>
        <dbReference type="Rhea" id="RHEA-COMP:16797"/>
        <dbReference type="Rhea" id="RHEA-COMP:16798"/>
        <dbReference type="ChEBI" id="CHEBI:15378"/>
        <dbReference type="ChEBI" id="CHEBI:57856"/>
        <dbReference type="ChEBI" id="CHEBI:59789"/>
        <dbReference type="ChEBI" id="CHEBI:156483"/>
        <dbReference type="ChEBI" id="CHEBI:156484"/>
        <dbReference type="EC" id="2.1.1.375"/>
    </reaction>
</comment>
<comment type="catalytic activity">
    <reaction evidence="2">
        <text>a 5'-end (5'-triphosphoguanosine)-adenylyl-adenylyl-cytidylyl-adenosine in mRNA + S-adenosyl-L-methionine = a 5'-end (5'-triphosphoguanosine)-(2'-O-methyladenylyl)-adenylyl-cytidylyl-adenosine in mRNA + S-adenosyl-L-homocysteine + H(+)</text>
        <dbReference type="Rhea" id="RHEA:65380"/>
        <dbReference type="Rhea" id="RHEA-COMP:16797"/>
        <dbReference type="Rhea" id="RHEA-COMP:16801"/>
        <dbReference type="ChEBI" id="CHEBI:15378"/>
        <dbReference type="ChEBI" id="CHEBI:57856"/>
        <dbReference type="ChEBI" id="CHEBI:59789"/>
        <dbReference type="ChEBI" id="CHEBI:156482"/>
        <dbReference type="ChEBI" id="CHEBI:156484"/>
    </reaction>
</comment>
<comment type="catalytic activity">
    <reaction evidence="3">
        <text>a 5'-end triphospho-adenylyl-adenylyl-cytidylyl-adenosine in mRNA + GDP + H(+) = a 5'-end (5'-triphosphoguanosine)-adenylyl-adenylyl-cytidylyl-adenosine in mRNA + diphosphate</text>
        <dbReference type="Rhea" id="RHEA:65436"/>
        <dbReference type="Rhea" id="RHEA-COMP:16797"/>
        <dbReference type="Rhea" id="RHEA-COMP:16799"/>
        <dbReference type="ChEBI" id="CHEBI:15378"/>
        <dbReference type="ChEBI" id="CHEBI:33019"/>
        <dbReference type="ChEBI" id="CHEBI:58189"/>
        <dbReference type="ChEBI" id="CHEBI:156484"/>
        <dbReference type="ChEBI" id="CHEBI:156503"/>
        <dbReference type="EC" id="2.7.7.88"/>
    </reaction>
</comment>
<comment type="catalytic activity">
    <reaction evidence="2">
        <text>a 5'-end (5'-triphosphoguanosine)-(2'-O-methyladenylyl)-adenylyl-cytidylyl-adenosine in mRNA + S-adenosyl-L-methionine = a 5'-end (N(7)-methyl 5'-triphosphoguanosine)-(2'-O-methyladenylyl)-adenylyl-cytidylyl-adenosine in mRNA + S-adenosyl-L-homocysteine</text>
        <dbReference type="Rhea" id="RHEA:65440"/>
        <dbReference type="Rhea" id="RHEA-COMP:16798"/>
        <dbReference type="Rhea" id="RHEA-COMP:16801"/>
        <dbReference type="ChEBI" id="CHEBI:57856"/>
        <dbReference type="ChEBI" id="CHEBI:59789"/>
        <dbReference type="ChEBI" id="CHEBI:156482"/>
        <dbReference type="ChEBI" id="CHEBI:156483"/>
    </reaction>
</comment>
<comment type="catalytic activity">
    <reaction evidence="3">
        <text>GTP + H2O = GDP + phosphate + H(+)</text>
        <dbReference type="Rhea" id="RHEA:19669"/>
        <dbReference type="ChEBI" id="CHEBI:15377"/>
        <dbReference type="ChEBI" id="CHEBI:15378"/>
        <dbReference type="ChEBI" id="CHEBI:37565"/>
        <dbReference type="ChEBI" id="CHEBI:43474"/>
        <dbReference type="ChEBI" id="CHEBI:58189"/>
    </reaction>
</comment>
<comment type="subcellular location">
    <subcellularLocation>
        <location>Host cytoplasm</location>
    </subcellularLocation>
    <subcellularLocation>
        <location evidence="1">Virion</location>
    </subcellularLocation>
</comment>
<evidence type="ECO:0000250" key="1"/>
<evidence type="ECO:0000250" key="2">
    <source>
        <dbReference type="UniProtKB" id="P03523"/>
    </source>
</evidence>
<evidence type="ECO:0000250" key="3">
    <source>
        <dbReference type="UniProtKB" id="P28887"/>
    </source>
</evidence>
<evidence type="ECO:0000255" key="4">
    <source>
        <dbReference type="PROSITE-ProRule" id="PRU00539"/>
    </source>
</evidence>
<evidence type="ECO:0000255" key="5">
    <source>
        <dbReference type="PROSITE-ProRule" id="PRU00923"/>
    </source>
</evidence>
<evidence type="ECO:0000256" key="6">
    <source>
        <dbReference type="SAM" id="MobiDB-lite"/>
    </source>
</evidence>
<evidence type="ECO:0000305" key="7"/>
<sequence>MATQHTQYPDARLSSPIVLDQCDLVTRACGLYSSYSLNPQLRQCKLPKHIYRLKFDTIVSKFLSDTPVATLPIDYLVPILLRSLTGHGDRPLTPTCNQFLDEIINYTLHDAAFLDYYLKATGAQDHLTNIATREKLKNEILNNDYVHQLFFWHDLSILARRGRLNRGNNRSTWFVHDEFIDILGYGDYIFWKIPLSLLPVTIDGVPHAATDWYQPTLFKESILGHSQILSVSTAEILIMCKDIITCRFNTSLIASIAKLEDVDVSDYPDPSDILKIYNAGDYVISILGSEGYKIIKYLEPLCLAKIQLCSKFTERKGRFLTQMHLSVINDLRELISNRRLKDYQQEKIRDFHKILLQLQLSPQQFCELFSVQKHWGHPILHSEKAIQKVKRHATILKALRPNVIFETYCVFKYNIAKHYFDSQGTWYSVISDRNLTPGLNSFIKRNHFPSLPMIKDLLWEFYHLNHPPLFSTKVISDLSIFIKDRATAVEQTCWDAVFEPNVLGYNPPNKFSTKRVPEQFLEQEDFSIESVLNYAQELHYLLPQNRNFSFSLKEKELNIGRTFGKLPYLTRNVQTLCEALLADGLAKAFPSNMMVVTEREQKESLLHQASWHHTSDDFGENATVRGSSFVTDLEKYNLAFRYEFTAPFIEYCNHCYGVRNVFNWMHYLIPQCYMHVSDYYNPPHNVNLSNREYPPEGPSSYRGHLGGIEGLQQKLWTSISCAQISLVEIKTGFKLRSAVMGDNQCITVLSVFPLKTDPEEQEQSAEDNAARVAASLAKVTSACGIFLKPDETFVHSGFIYFGKKQYLNGVQLPQSLKTAARMAPLSDAIFDDLQGTLASIGTAFERAISETRHILPCRIVAAFHTYFAVRILQYHHLGFNKGIDLGQLSLSKPLDYGTITLTLAVPQVLGGLSFLNPEKCFYRNFGDPVTSGLFQLRVYLEMVNMKDLFCPLISKNPGNCSAIDFVLNPSGLNVPGSQDLTSFLRQIVRRSITLTARNKLINTLFHASADLEDEMVCKWLLSSNPVMSRFAADIFSRTPSGKRLQILGYLEGTRTLLASKIINNNSETPVLDKLRKITLQRWNLWFSYLDHCDQLLADALQKISCTVDLAQILREYTWSHILEGRSLIGATLPCMVEQFKVKWLGQYEPCPECLNKKGSNAYVSVAVKDQVVSAWPNTSRISWTIGSGVPYIGSRTEDKIGQPAIKPRCPSSALKEAIELASRLTWVTQGGSNSEQLIRPFLEARVNLSVSEVLQMTPSHYSGNIVHRYNDQYSPHSFMANRMSNTATRLIVSTNTLGEFSGGGQAARDSNIIFQNVINLAVALYDIRFRNTNTSDIRHNRAHLHLTECCTKEVPAQYLTYTSALNLDLSRYRDNELIYDSNPLKGGLNCNLTIDSPLVKGPRLNMIEDDLLRFPHLSGWELAKTVVQSIISDNSNSSTDPISSGETRSFTTHFLTYPQIGLLYSFGAVLCFYLGNTILWTKKLDYEQFLYYLHNQLHNLPHRALRVFKPTFKHASVMSRLMEIDSNFSIYIGGTSGDRGLSDAARLFLRTAIASFLQFLKSWIIDRQKTIPLWIVYPLEGQQPESINEFLHKILGLLKQGPKSIPKEVSIQNDGHLDLAENNYVYNSKSTASNFFHASLAYWRSRKSRKTQDHNDFSRGDGTLTEPVRKFSSNHQSDEKYYNVTCGKSPKPQERKDFSQYRLSNNGQTMSNHRKKGKFHKWNPCKMLMESQRGTVLTEGDYFQNNTPPTDDVSSPHRLILPFFKLGNHNHAHDQDAQELMNQNIKQYLHQLRSMLDTTIYCRFTGIVSSMHYKLDEVLLEYNSFDSAITLAEGEGSGALLLLQKYSTRLLFLNTLATEHSIESEVVSGFSTPRMLLPIMQKVHEGQVTVILNNSASQITDITSSMWLSNQKYNLPCQVEIIMMDAETTENLNRSQLYRAVYNLILDHIDPQYLKVVVLKVFLSDIEGILWINDYLAPLFGAGYLIKPITSSARSSEWYLCLSNLISTNRRSAHQTHKACLGVIRDALQAQVQRGVYWLSHIAQYATKNLHCEYIGLGFPSLEKVLYHRYNLVDTGLGPLSSVIRHLTNLQAEIRDLVLDYNLMRESRTQTYHFIKTAKGRITKLVNDFLKFSLIVQALKNNSSWYTELKKLPEVINVCNRFYHTHNCECQEKFFVQTLYLQRLRDAEIKLIERLTGLMRFYPEGLIYSNHT</sequence>
<protein>
    <recommendedName>
        <fullName>RNA-directed RNA polymerase L</fullName>
        <shortName>Protein L</shortName>
    </recommendedName>
    <alternativeName>
        <fullName>Large structural protein</fullName>
    </alternativeName>
    <alternativeName>
        <fullName>Replicase</fullName>
    </alternativeName>
    <alternativeName>
        <fullName>Transcriptase</fullName>
    </alternativeName>
    <domain>
        <recommendedName>
            <fullName>RNA-directed RNA polymerase</fullName>
            <ecNumber evidence="3">2.7.7.48</ecNumber>
        </recommendedName>
    </domain>
    <domain>
        <recommendedName>
            <fullName evidence="2">GTP phosphohydrolase</fullName>
            <ecNumber evidence="2">3.6.1.-</ecNumber>
        </recommendedName>
    </domain>
    <domain>
        <recommendedName>
            <fullName evidence="7">GDP polyribonucleotidyltransferase</fullName>
            <ecNumber evidence="2">2.7.7.88</ecNumber>
        </recommendedName>
        <alternativeName>
            <fullName evidence="7">PRNTase</fullName>
        </alternativeName>
    </domain>
    <domain>
        <recommendedName>
            <fullName evidence="7">mRNA cap methyltransferase</fullName>
            <ecNumber evidence="2">2.1.1.375</ecNumber>
        </recommendedName>
        <alternativeName>
            <fullName evidence="2">mRNA (guanine-N(7)-)-methyltransferase</fullName>
            <shortName evidence="2">G-N7-MTase</shortName>
        </alternativeName>
        <alternativeName>
            <fullName evidence="2">mRNA (nucleoside-2'-O-)-methyltransferase</fullName>
            <shortName evidence="2">N1-2'-O-MTase</shortName>
        </alternativeName>
    </domain>
</protein>
<feature type="chain" id="PRO_0000245048" description="RNA-directed RNA polymerase L">
    <location>
        <begin position="1"/>
        <end position="2212"/>
    </location>
</feature>
<feature type="domain" description="RdRp catalytic" evidence="4">
    <location>
        <begin position="625"/>
        <end position="809"/>
    </location>
</feature>
<feature type="domain" description="Mononegavirus-type SAM-dependent 2'-O-MTase" evidence="5">
    <location>
        <begin position="1803"/>
        <end position="2001"/>
    </location>
</feature>
<feature type="region of interest" description="Disordered" evidence="6">
    <location>
        <begin position="1651"/>
        <end position="1697"/>
    </location>
</feature>
<feature type="sequence variant" description="In strain: Isolate Pennsylvania-89.">
    <original>K</original>
    <variation>R</variation>
    <location>
        <position position="192"/>
    </location>
</feature>
<feature type="sequence variant" description="In strain: Isolate Pennsylvania-89.">
    <original>H</original>
    <variation>R</variation>
    <location>
        <position position="324"/>
    </location>
</feature>
<feature type="sequence variant" description="In strain: Isolate Pennsylvania-89.">
    <original>F</original>
    <variation>V</variation>
    <location>
        <position position="442"/>
    </location>
</feature>
<feature type="sequence variant" description="In strain: Isolate Pennsylvania-89.">
    <original>E</original>
    <variation>G</variation>
    <location>
        <position position="600"/>
    </location>
</feature>
<feature type="sequence variant" description="In strain: Isolate Pennsylvania-89.">
    <original>K</original>
    <variation>E</variation>
    <location>
        <position position="755"/>
    </location>
</feature>
<feature type="sequence variant" description="In strain: Isolate Pennsylvania-89.">
    <original>D</original>
    <variation>G</variation>
    <location>
        <position position="1374"/>
    </location>
</feature>
<feature type="sequence variant" description="In strain: Isolate Pennsylvania-89.">
    <original>E</original>
    <variation>D</variation>
    <location>
        <position position="1487"/>
    </location>
</feature>
<feature type="sequence variant" description="In strain: Isolate Pennsylvania-89.">
    <original>E</original>
    <variation>A</variation>
    <location>
        <position position="1679"/>
    </location>
</feature>
<feature type="sequence variant" description="In strain: Isolate Pennsylvania-89.">
    <original>ASQ</original>
    <variation>SSH</variation>
    <location>
        <begin position="1896"/>
        <end position="1898"/>
    </location>
</feature>
<feature type="sequence variant" description="In strain: Isolate Pennsylvania-89.">
    <original>S</original>
    <variation>SS</variation>
    <location>
        <position position="1909"/>
    </location>
</feature>
<organismHost>
    <name type="scientific">Epomops franqueti</name>
    <name type="common">Franquet's epauletted fruit bat</name>
    <name type="synonym">Epomophorus franqueti</name>
    <dbReference type="NCBI Taxonomy" id="77231"/>
</organismHost>
<organismHost>
    <name type="scientific">Homo sapiens</name>
    <name type="common">Human</name>
    <dbReference type="NCBI Taxonomy" id="9606"/>
</organismHost>
<organismHost>
    <name type="scientific">Myonycteris torquata</name>
    <name type="common">Little collared fruit bat</name>
    <dbReference type="NCBI Taxonomy" id="77243"/>
</organismHost>
<organismHost>
    <name type="scientific">Sus scrofa</name>
    <name type="common">Pig</name>
    <dbReference type="NCBI Taxonomy" id="9823"/>
</organismHost>
<accession>Q8JPX5</accession>
<accession>Q5UAK4</accession>
<keyword id="KW-0067">ATP-binding</keyword>
<keyword id="KW-1035">Host cytoplasm</keyword>
<keyword id="KW-0378">Hydrolase</keyword>
<keyword id="KW-0489">Methyltransferase</keyword>
<keyword id="KW-0506">mRNA capping</keyword>
<keyword id="KW-0507">mRNA processing</keyword>
<keyword id="KW-0511">Multifunctional enzyme</keyword>
<keyword id="KW-0547">Nucleotide-binding</keyword>
<keyword id="KW-0548">Nucleotidyltransferase</keyword>
<keyword id="KW-0696">RNA-directed RNA polymerase</keyword>
<keyword id="KW-0949">S-adenosyl-L-methionine</keyword>
<keyword id="KW-0808">Transferase</keyword>
<keyword id="KW-0693">Viral RNA replication</keyword>
<keyword id="KW-0946">Virion</keyword>
<reference key="1">
    <citation type="journal article" date="2002" name="Virus Res.">
        <title>Molecular characterization of an isolate from the 1989/90 epizootic of Ebola virus Reston among macaques imported into the United States.</title>
        <authorList>
            <person name="Groseth A."/>
            <person name="Stroeher U."/>
            <person name="Theriault S."/>
            <person name="Feldmann H."/>
        </authorList>
    </citation>
    <scope>NUCLEOTIDE SEQUENCE [GENOMIC RNA]</scope>
</reference>
<reference key="2">
    <citation type="journal article" date="2005" name="Virology">
        <title>A reconstituted replication and transcription system for Ebola virus Reston and comparison with Ebola virus Zaire.</title>
        <authorList>
            <person name="Boehmann Y."/>
            <person name="Enterlein S."/>
            <person name="Randolf A."/>
            <person name="Muehlberger E.I."/>
        </authorList>
    </citation>
    <scope>NUCLEOTIDE SEQUENCE [GENOMIC RNA]</scope>
    <source>
        <strain>Isolate Pennsylvania-89</strain>
    </source>
</reference>
<proteinExistence type="inferred from homology"/>
<gene>
    <name type="primary">L</name>
</gene>
<dbReference type="EC" id="2.7.7.48" evidence="3"/>
<dbReference type="EC" id="3.6.1.-" evidence="2"/>
<dbReference type="EC" id="2.7.7.88" evidence="2"/>
<dbReference type="EC" id="2.1.1.375" evidence="2"/>
<dbReference type="EMBL" id="AF522874">
    <property type="protein sequence ID" value="AAN04454.1"/>
    <property type="molecule type" value="Genomic_RNA"/>
</dbReference>
<dbReference type="EMBL" id="AY769362">
    <property type="protein sequence ID" value="AAV48581.1"/>
    <property type="molecule type" value="Genomic_RNA"/>
</dbReference>
<dbReference type="RefSeq" id="NP_690587.1">
    <property type="nucleotide sequence ID" value="NC_004161.1"/>
</dbReference>
<dbReference type="SMR" id="Q8JPX5"/>
<dbReference type="GeneID" id="955191"/>
<dbReference type="KEGG" id="vg:955191"/>
<dbReference type="Proteomes" id="UP000007207">
    <property type="component" value="Segment"/>
</dbReference>
<dbReference type="Proteomes" id="UP000138664">
    <property type="component" value="Genome"/>
</dbReference>
<dbReference type="GO" id="GO:0030430">
    <property type="term" value="C:host cell cytoplasm"/>
    <property type="evidence" value="ECO:0007669"/>
    <property type="project" value="UniProtKB-SubCell"/>
</dbReference>
<dbReference type="GO" id="GO:0044423">
    <property type="term" value="C:virion component"/>
    <property type="evidence" value="ECO:0007669"/>
    <property type="project" value="UniProtKB-KW"/>
</dbReference>
<dbReference type="GO" id="GO:0005524">
    <property type="term" value="F:ATP binding"/>
    <property type="evidence" value="ECO:0007669"/>
    <property type="project" value="UniProtKB-KW"/>
</dbReference>
<dbReference type="GO" id="GO:0003924">
    <property type="term" value="F:GTPase activity"/>
    <property type="evidence" value="ECO:0007669"/>
    <property type="project" value="RHEA"/>
</dbReference>
<dbReference type="GO" id="GO:0004482">
    <property type="term" value="F:mRNA 5'-cap (guanine-N7-)-methyltransferase activity"/>
    <property type="evidence" value="ECO:0007669"/>
    <property type="project" value="InterPro"/>
</dbReference>
<dbReference type="GO" id="GO:0003968">
    <property type="term" value="F:RNA-directed RNA polymerase activity"/>
    <property type="evidence" value="ECO:0007669"/>
    <property type="project" value="UniProtKB-KW"/>
</dbReference>
<dbReference type="GO" id="GO:0039689">
    <property type="term" value="P:negative stranded viral RNA replication"/>
    <property type="evidence" value="ECO:0000250"/>
    <property type="project" value="UniProtKB"/>
</dbReference>
<dbReference type="GO" id="GO:0039697">
    <property type="term" value="P:negative stranded viral RNA transcription"/>
    <property type="evidence" value="ECO:0000250"/>
    <property type="project" value="UniProtKB"/>
</dbReference>
<dbReference type="InterPro" id="IPR039736">
    <property type="entry name" value="L_poly_C"/>
</dbReference>
<dbReference type="InterPro" id="IPR026890">
    <property type="entry name" value="Mononeg_mRNAcap"/>
</dbReference>
<dbReference type="InterPro" id="IPR014023">
    <property type="entry name" value="Mononeg_RNA_pol_cat"/>
</dbReference>
<dbReference type="InterPro" id="IPR025786">
    <property type="entry name" value="Mononega_L_MeTrfase"/>
</dbReference>
<dbReference type="InterPro" id="IPR017235">
    <property type="entry name" value="RNA-dir_pol_L_filovirus"/>
</dbReference>
<dbReference type="NCBIfam" id="TIGR04198">
    <property type="entry name" value="paramyx_RNAcap"/>
    <property type="match status" value="1"/>
</dbReference>
<dbReference type="Pfam" id="PF14318">
    <property type="entry name" value="Mononeg_mRNAcap"/>
    <property type="match status" value="1"/>
</dbReference>
<dbReference type="Pfam" id="PF00946">
    <property type="entry name" value="Mononeg_RNA_pol"/>
    <property type="match status" value="1"/>
</dbReference>
<dbReference type="PIRSF" id="PIRSF037548">
    <property type="entry name" value="RNA_pol_Filoviridae"/>
    <property type="match status" value="1"/>
</dbReference>
<dbReference type="PROSITE" id="PS50526">
    <property type="entry name" value="RDRP_SSRNA_NEG_NONSEG"/>
    <property type="match status" value="1"/>
</dbReference>
<dbReference type="PROSITE" id="PS51590">
    <property type="entry name" value="SAM_MT_MNV_L"/>
    <property type="match status" value="1"/>
</dbReference>